<feature type="chain" id="PRO_0000080177" description="Sulfate transporter 3.1">
    <location>
        <begin position="1"/>
        <end position="658"/>
    </location>
</feature>
<feature type="topological domain" description="Cytoplasmic" evidence="1">
    <location>
        <begin position="1"/>
        <end position="85"/>
    </location>
</feature>
<feature type="transmembrane region" description="Helical" evidence="1">
    <location>
        <begin position="86"/>
        <end position="106"/>
    </location>
</feature>
<feature type="topological domain" description="Extracellular" evidence="1">
    <location>
        <begin position="107"/>
        <end position="108"/>
    </location>
</feature>
<feature type="transmembrane region" description="Helical" evidence="1">
    <location>
        <begin position="109"/>
        <end position="129"/>
    </location>
</feature>
<feature type="topological domain" description="Cytoplasmic" evidence="1">
    <location>
        <begin position="130"/>
        <end position="133"/>
    </location>
</feature>
<feature type="transmembrane region" description="Helical" evidence="1">
    <location>
        <begin position="134"/>
        <end position="154"/>
    </location>
</feature>
<feature type="topological domain" description="Extracellular" evidence="1">
    <location>
        <begin position="155"/>
        <end position="163"/>
    </location>
</feature>
<feature type="transmembrane region" description="Helical" evidence="1">
    <location>
        <begin position="164"/>
        <end position="184"/>
    </location>
</feature>
<feature type="topological domain" description="Cytoplasmic" evidence="1">
    <location>
        <position position="185"/>
    </location>
</feature>
<feature type="transmembrane region" description="Helical" evidence="1">
    <location>
        <begin position="186"/>
        <end position="206"/>
    </location>
</feature>
<feature type="topological domain" description="Extracellular" evidence="1">
    <location>
        <begin position="207"/>
        <end position="245"/>
    </location>
</feature>
<feature type="transmembrane region" description="Helical" evidence="1">
    <location>
        <begin position="246"/>
        <end position="266"/>
    </location>
</feature>
<feature type="topological domain" description="Cytoplasmic" evidence="1">
    <location>
        <begin position="267"/>
        <end position="271"/>
    </location>
</feature>
<feature type="transmembrane region" description="Helical" evidence="1">
    <location>
        <begin position="272"/>
        <end position="292"/>
    </location>
</feature>
<feature type="topological domain" description="Extracellular" evidence="1">
    <location>
        <begin position="293"/>
        <end position="332"/>
    </location>
</feature>
<feature type="transmembrane region" description="Helical" evidence="1">
    <location>
        <begin position="333"/>
        <end position="353"/>
    </location>
</feature>
<feature type="topological domain" description="Cytoplasmic" evidence="1">
    <location>
        <begin position="354"/>
        <end position="363"/>
    </location>
</feature>
<feature type="transmembrane region" description="Helical" evidence="1">
    <location>
        <begin position="364"/>
        <end position="384"/>
    </location>
</feature>
<feature type="topological domain" description="Extracellular" evidence="1">
    <location>
        <begin position="385"/>
        <end position="398"/>
    </location>
</feature>
<feature type="transmembrane region" description="Helical" evidence="1">
    <location>
        <begin position="399"/>
        <end position="419"/>
    </location>
</feature>
<feature type="topological domain" description="Cytoplasmic" evidence="1">
    <location>
        <begin position="420"/>
        <end position="425"/>
    </location>
</feature>
<feature type="transmembrane region" description="Helical" evidence="1">
    <location>
        <begin position="426"/>
        <end position="446"/>
    </location>
</feature>
<feature type="topological domain" description="Extracellular" evidence="1">
    <location>
        <begin position="447"/>
        <end position="464"/>
    </location>
</feature>
<feature type="transmembrane region" description="Helical" evidence="1">
    <location>
        <begin position="465"/>
        <end position="485"/>
    </location>
</feature>
<feature type="topological domain" description="Cytoplasmic" evidence="1">
    <location>
        <begin position="486"/>
        <end position="658"/>
    </location>
</feature>
<feature type="domain" description="STAS" evidence="2">
    <location>
        <begin position="513"/>
        <end position="637"/>
    </location>
</feature>
<feature type="sequence conflict" description="In Ref. 3; AAC14417." evidence="3" ref="3">
    <original>V</original>
    <variation>L</variation>
    <location>
        <position position="208"/>
    </location>
</feature>
<feature type="sequence conflict" description="In Ref. 1; BAA21657." evidence="3" ref="1">
    <original>V</original>
    <variation>I</variation>
    <location>
        <position position="344"/>
    </location>
</feature>
<keyword id="KW-0472">Membrane</keyword>
<keyword id="KW-1185">Reference proteome</keyword>
<keyword id="KW-0346">Stress response</keyword>
<keyword id="KW-0764">Sulfate transport</keyword>
<keyword id="KW-0769">Symport</keyword>
<keyword id="KW-0812">Transmembrane</keyword>
<keyword id="KW-1133">Transmembrane helix</keyword>
<keyword id="KW-0813">Transport</keyword>
<evidence type="ECO:0000255" key="1"/>
<evidence type="ECO:0000255" key="2">
    <source>
        <dbReference type="PROSITE-ProRule" id="PRU00198"/>
    </source>
</evidence>
<evidence type="ECO:0000305" key="3"/>
<protein>
    <recommendedName>
        <fullName>Sulfate transporter 3.1</fullName>
    </recommendedName>
    <alternativeName>
        <fullName>AST12</fullName>
    </alternativeName>
    <alternativeName>
        <fullName>AtST1</fullName>
    </alternativeName>
</protein>
<reference key="1">
    <citation type="online journal article" date="1997" name="Plant Gene Register">
        <title>Isolation and characterization of a cDNA encoding a sulfate transporter from Arabidopsis thaliana.</title>
        <authorList>
            <person name="Yamaguchi Y."/>
            <person name="Nakamura T."/>
            <person name="Harada E."/>
            <person name="Koizumi N."/>
            <person name="Sano H."/>
        </authorList>
        <locator>PGR97-051</locator>
    </citation>
    <scope>NUCLEOTIDE SEQUENCE</scope>
    <source>
        <strain>cv. Landsberg erecta</strain>
        <tissue>Aerial part</tissue>
    </source>
</reference>
<reference key="2">
    <citation type="online journal article" date="1999" name="Plant Gene Register">
        <title>Identification of two leaf-specific sulfate transporters in Arabidopsis thaliana.</title>
        <authorList>
            <person name="Takahashi H."/>
            <person name="Sasakura N."/>
            <person name="Kimura A."/>
            <person name="Watanabe A."/>
            <person name="Saito K."/>
        </authorList>
        <locator>PGR99-154</locator>
    </citation>
    <scope>NUCLEOTIDE SEQUENCE</scope>
    <source>
        <strain>cv. Columbia</strain>
    </source>
</reference>
<reference key="3">
    <citation type="journal article" date="1999" name="Plant Mol. Biol.">
        <title>Fine sequence analysis of 60 kb around the Arabidopsis thaliana AtEm1 locus on chromosome III.</title>
        <authorList>
            <person name="Comella P."/>
            <person name="Wu H.-J."/>
            <person name="Laudie M."/>
            <person name="Berger C."/>
            <person name="Cooke R."/>
            <person name="Delseny M."/>
            <person name="Grellet F."/>
        </authorList>
    </citation>
    <scope>NUCLEOTIDE SEQUENCE [LARGE SCALE GENOMIC DNA]</scope>
    <source>
        <strain>cv. Columbia</strain>
    </source>
</reference>
<reference key="4">
    <citation type="journal article" date="2000" name="Nature">
        <title>Sequence and analysis of chromosome 3 of the plant Arabidopsis thaliana.</title>
        <authorList>
            <person name="Salanoubat M."/>
            <person name="Lemcke K."/>
            <person name="Rieger M."/>
            <person name="Ansorge W."/>
            <person name="Unseld M."/>
            <person name="Fartmann B."/>
            <person name="Valle G."/>
            <person name="Bloecker H."/>
            <person name="Perez-Alonso M."/>
            <person name="Obermaier B."/>
            <person name="Delseny M."/>
            <person name="Boutry M."/>
            <person name="Grivell L.A."/>
            <person name="Mache R."/>
            <person name="Puigdomenech P."/>
            <person name="De Simone V."/>
            <person name="Choisne N."/>
            <person name="Artiguenave F."/>
            <person name="Robert C."/>
            <person name="Brottier P."/>
            <person name="Wincker P."/>
            <person name="Cattolico L."/>
            <person name="Weissenbach J."/>
            <person name="Saurin W."/>
            <person name="Quetier F."/>
            <person name="Schaefer M."/>
            <person name="Mueller-Auer S."/>
            <person name="Gabel C."/>
            <person name="Fuchs M."/>
            <person name="Benes V."/>
            <person name="Wurmbach E."/>
            <person name="Drzonek H."/>
            <person name="Erfle H."/>
            <person name="Jordan N."/>
            <person name="Bangert S."/>
            <person name="Wiedelmann R."/>
            <person name="Kranz H."/>
            <person name="Voss H."/>
            <person name="Holland R."/>
            <person name="Brandt P."/>
            <person name="Nyakatura G."/>
            <person name="Vezzi A."/>
            <person name="D'Angelo M."/>
            <person name="Pallavicini A."/>
            <person name="Toppo S."/>
            <person name="Simionati B."/>
            <person name="Conrad A."/>
            <person name="Hornischer K."/>
            <person name="Kauer G."/>
            <person name="Loehnert T.-H."/>
            <person name="Nordsiek G."/>
            <person name="Reichelt J."/>
            <person name="Scharfe M."/>
            <person name="Schoen O."/>
            <person name="Bargues M."/>
            <person name="Terol J."/>
            <person name="Climent J."/>
            <person name="Navarro P."/>
            <person name="Collado C."/>
            <person name="Perez-Perez A."/>
            <person name="Ottenwaelder B."/>
            <person name="Duchemin D."/>
            <person name="Cooke R."/>
            <person name="Laudie M."/>
            <person name="Berger-Llauro C."/>
            <person name="Purnelle B."/>
            <person name="Masuy D."/>
            <person name="de Haan M."/>
            <person name="Maarse A.C."/>
            <person name="Alcaraz J.-P."/>
            <person name="Cottet A."/>
            <person name="Casacuberta E."/>
            <person name="Monfort A."/>
            <person name="Argiriou A."/>
            <person name="Flores M."/>
            <person name="Liguori R."/>
            <person name="Vitale D."/>
            <person name="Mannhaupt G."/>
            <person name="Haase D."/>
            <person name="Schoof H."/>
            <person name="Rudd S."/>
            <person name="Zaccaria P."/>
            <person name="Mewes H.-W."/>
            <person name="Mayer K.F.X."/>
            <person name="Kaul S."/>
            <person name="Town C.D."/>
            <person name="Koo H.L."/>
            <person name="Tallon L.J."/>
            <person name="Jenkins J."/>
            <person name="Rooney T."/>
            <person name="Rizzo M."/>
            <person name="Walts A."/>
            <person name="Utterback T."/>
            <person name="Fujii C.Y."/>
            <person name="Shea T.P."/>
            <person name="Creasy T.H."/>
            <person name="Haas B."/>
            <person name="Maiti R."/>
            <person name="Wu D."/>
            <person name="Peterson J."/>
            <person name="Van Aken S."/>
            <person name="Pai G."/>
            <person name="Militscher J."/>
            <person name="Sellers P."/>
            <person name="Gill J.E."/>
            <person name="Feldblyum T.V."/>
            <person name="Preuss D."/>
            <person name="Lin X."/>
            <person name="Nierman W.C."/>
            <person name="Salzberg S.L."/>
            <person name="White O."/>
            <person name="Venter J.C."/>
            <person name="Fraser C.M."/>
            <person name="Kaneko T."/>
            <person name="Nakamura Y."/>
            <person name="Sato S."/>
            <person name="Kato T."/>
            <person name="Asamizu E."/>
            <person name="Sasamoto S."/>
            <person name="Kimura T."/>
            <person name="Idesawa K."/>
            <person name="Kawashima K."/>
            <person name="Kishida Y."/>
            <person name="Kiyokawa C."/>
            <person name="Kohara M."/>
            <person name="Matsumoto M."/>
            <person name="Matsuno A."/>
            <person name="Muraki A."/>
            <person name="Nakayama S."/>
            <person name="Nakazaki N."/>
            <person name="Shinpo S."/>
            <person name="Takeuchi C."/>
            <person name="Wada T."/>
            <person name="Watanabe A."/>
            <person name="Yamada M."/>
            <person name="Yasuda M."/>
            <person name="Tabata S."/>
        </authorList>
    </citation>
    <scope>NUCLEOTIDE SEQUENCE [LARGE SCALE GENOMIC DNA]</scope>
    <source>
        <strain>cv. Columbia</strain>
    </source>
</reference>
<reference key="5">
    <citation type="journal article" date="2017" name="Plant J.">
        <title>Araport11: a complete reannotation of the Arabidopsis thaliana reference genome.</title>
        <authorList>
            <person name="Cheng C.Y."/>
            <person name="Krishnakumar V."/>
            <person name="Chan A.P."/>
            <person name="Thibaud-Nissen F."/>
            <person name="Schobel S."/>
            <person name="Town C.D."/>
        </authorList>
    </citation>
    <scope>GENOME REANNOTATION</scope>
    <source>
        <strain>cv. Columbia</strain>
    </source>
</reference>
<reference key="6">
    <citation type="journal article" date="2003" name="Science">
        <title>Empirical analysis of transcriptional activity in the Arabidopsis genome.</title>
        <authorList>
            <person name="Yamada K."/>
            <person name="Lim J."/>
            <person name="Dale J.M."/>
            <person name="Chen H."/>
            <person name="Shinn P."/>
            <person name="Palm C.J."/>
            <person name="Southwick A.M."/>
            <person name="Wu H.C."/>
            <person name="Kim C.J."/>
            <person name="Nguyen M."/>
            <person name="Pham P.K."/>
            <person name="Cheuk R.F."/>
            <person name="Karlin-Newmann G."/>
            <person name="Liu S.X."/>
            <person name="Lam B."/>
            <person name="Sakano H."/>
            <person name="Wu T."/>
            <person name="Yu G."/>
            <person name="Miranda M."/>
            <person name="Quach H.L."/>
            <person name="Tripp M."/>
            <person name="Chang C.H."/>
            <person name="Lee J.M."/>
            <person name="Toriumi M.J."/>
            <person name="Chan M.M."/>
            <person name="Tang C.C."/>
            <person name="Onodera C.S."/>
            <person name="Deng J.M."/>
            <person name="Akiyama K."/>
            <person name="Ansari Y."/>
            <person name="Arakawa T."/>
            <person name="Banh J."/>
            <person name="Banno F."/>
            <person name="Bowser L."/>
            <person name="Brooks S.Y."/>
            <person name="Carninci P."/>
            <person name="Chao Q."/>
            <person name="Choy N."/>
            <person name="Enju A."/>
            <person name="Goldsmith A.D."/>
            <person name="Gurjal M."/>
            <person name="Hansen N.F."/>
            <person name="Hayashizaki Y."/>
            <person name="Johnson-Hopson C."/>
            <person name="Hsuan V.W."/>
            <person name="Iida K."/>
            <person name="Karnes M."/>
            <person name="Khan S."/>
            <person name="Koesema E."/>
            <person name="Ishida J."/>
            <person name="Jiang P.X."/>
            <person name="Jones T."/>
            <person name="Kawai J."/>
            <person name="Kamiya A."/>
            <person name="Meyers C."/>
            <person name="Nakajima M."/>
            <person name="Narusaka M."/>
            <person name="Seki M."/>
            <person name="Sakurai T."/>
            <person name="Satou M."/>
            <person name="Tamse R."/>
            <person name="Vaysberg M."/>
            <person name="Wallender E.K."/>
            <person name="Wong C."/>
            <person name="Yamamura Y."/>
            <person name="Yuan S."/>
            <person name="Shinozaki K."/>
            <person name="Davis R.W."/>
            <person name="Theologis A."/>
            <person name="Ecker J.R."/>
        </authorList>
    </citation>
    <scope>NUCLEOTIDE SEQUENCE [LARGE SCALE MRNA]</scope>
    <source>
        <strain>cv. Columbia</strain>
    </source>
</reference>
<accession>Q9SV13</accession>
<accession>O23250</accession>
<accession>O64435</accession>
<accession>O65025</accession>
<sequence length="658" mass="72748">MGTEDYTFPQGAEELHRRHHTVEAPQPQPFLKSLQYSVKETLFPDDPFRQFKNQNASRKFVLGLKYFLPIFEWAPRYNLKFFKSDLIAGITIASLAIPQGISYAKLANLPPILGLYSSFVPPLVYAVLGSSRDLAVGTVAVASLLTGAMLSKEVDAEKDPKLYLHLAFTATFFAGVLEASLGIFRLGFIVDFLSHATIVGFMGGAATVVSLQQLKGIFGLKHFTDSTDVISVMRSVFSQTHEWRWESGVLGCGFLFFLLSTRYFSIKKPKFFWVAAMAPLTSVILGSLLVYFTHAERHGVQVIGDLKKGLNPLSGSDLIFTSPYMSTAVKTGLITGIIALAEGVAVGRSFAMFKNYNIDGNKEMIAFGMMNIVGSFTSCYLTTGPFSRSAVNYNAGCKTAMSNIVMAIAVMFTLLFLTPLFHYTPLVVLSAIIISAMLGLIDYQAAIHLWKVDKFDFLVCMSAYVGVVFGSVEIGLVVAVAISIARLLLFVSRPKTAVKGNIPNSMIYRNTEQYPSSRTVPGILILEIDAPIYFANASYLRERIIRWIDEEEERVKQSGESSLQYIILDMSAVGNIDTSGISMMVEIKKVIDRRALKLVLSNPKGEVVKKLTRSKFIGDHLGKEWMFLTVGEAVEACSYMLHTFKTEPASKNEPWNNV</sequence>
<proteinExistence type="evidence at transcript level"/>
<gene>
    <name type="primary">SULTR3;1</name>
    <name type="synonym">ST1</name>
    <name type="ordered locus">At3g51895</name>
    <name type="ORF">ATEM1.15</name>
    <name type="ORF">F4F15.10</name>
</gene>
<organism>
    <name type="scientific">Arabidopsis thaliana</name>
    <name type="common">Mouse-ear cress</name>
    <dbReference type="NCBI Taxonomy" id="3702"/>
    <lineage>
        <taxon>Eukaryota</taxon>
        <taxon>Viridiplantae</taxon>
        <taxon>Streptophyta</taxon>
        <taxon>Embryophyta</taxon>
        <taxon>Tracheophyta</taxon>
        <taxon>Spermatophyta</taxon>
        <taxon>Magnoliopsida</taxon>
        <taxon>eudicotyledons</taxon>
        <taxon>Gunneridae</taxon>
        <taxon>Pentapetalae</taxon>
        <taxon>rosids</taxon>
        <taxon>malvids</taxon>
        <taxon>Brassicales</taxon>
        <taxon>Brassicaceae</taxon>
        <taxon>Camelineae</taxon>
        <taxon>Arabidopsis</taxon>
    </lineage>
</organism>
<dbReference type="EMBL" id="D89631">
    <property type="protein sequence ID" value="BAA21657.1"/>
    <property type="molecule type" value="mRNA"/>
</dbReference>
<dbReference type="EMBL" id="AB012048">
    <property type="protein sequence ID" value="BAA25175.1"/>
    <property type="status" value="ALT_SEQ"/>
    <property type="molecule type" value="Genomic_DNA"/>
</dbReference>
<dbReference type="EMBL" id="AF049236">
    <property type="protein sequence ID" value="AAC14417.1"/>
    <property type="status" value="ALT_INIT"/>
    <property type="molecule type" value="Genomic_DNA"/>
</dbReference>
<dbReference type="EMBL" id="AL049711">
    <property type="protein sequence ID" value="CAB41310.1"/>
    <property type="molecule type" value="Genomic_DNA"/>
</dbReference>
<dbReference type="EMBL" id="CP002686">
    <property type="protein sequence ID" value="AEE78860.1"/>
    <property type="molecule type" value="Genomic_DNA"/>
</dbReference>
<dbReference type="EMBL" id="AY099873">
    <property type="protein sequence ID" value="AAM20724.1"/>
    <property type="molecule type" value="mRNA"/>
</dbReference>
<dbReference type="PIR" id="T48901">
    <property type="entry name" value="T48901"/>
</dbReference>
<dbReference type="PIR" id="T48902">
    <property type="entry name" value="T48902"/>
</dbReference>
<dbReference type="PIR" id="T49069">
    <property type="entry name" value="T49069"/>
</dbReference>
<dbReference type="PIR" id="T51161">
    <property type="entry name" value="T51161"/>
</dbReference>
<dbReference type="RefSeq" id="NP_190758.2">
    <property type="nucleotide sequence ID" value="NM_115049.5"/>
</dbReference>
<dbReference type="SMR" id="Q9SV13"/>
<dbReference type="BioGRID" id="9671">
    <property type="interactions" value="2"/>
</dbReference>
<dbReference type="FunCoup" id="Q9SV13">
    <property type="interactions" value="542"/>
</dbReference>
<dbReference type="STRING" id="3702.Q9SV13"/>
<dbReference type="PaxDb" id="3702-AT3G51895.1"/>
<dbReference type="ProteomicsDB" id="226756"/>
<dbReference type="EnsemblPlants" id="AT3G51895.1">
    <property type="protein sequence ID" value="AT3G51895.1"/>
    <property type="gene ID" value="AT3G51895"/>
</dbReference>
<dbReference type="GeneID" id="824353"/>
<dbReference type="Gramene" id="AT3G51895.1">
    <property type="protein sequence ID" value="AT3G51895.1"/>
    <property type="gene ID" value="AT3G51895"/>
</dbReference>
<dbReference type="KEGG" id="ath:AT3G51895"/>
<dbReference type="Araport" id="AT3G51895"/>
<dbReference type="TAIR" id="AT3G51895">
    <property type="gene designation" value="SULTR3"/>
</dbReference>
<dbReference type="eggNOG" id="KOG0236">
    <property type="taxonomic scope" value="Eukaryota"/>
</dbReference>
<dbReference type="HOGENOM" id="CLU_003182_13_2_1"/>
<dbReference type="InParanoid" id="Q9SV13"/>
<dbReference type="OMA" id="TGPMSVT"/>
<dbReference type="PhylomeDB" id="Q9SV13"/>
<dbReference type="PRO" id="PR:Q9SV13"/>
<dbReference type="Proteomes" id="UP000006548">
    <property type="component" value="Chromosome 3"/>
</dbReference>
<dbReference type="ExpressionAtlas" id="Q9SV13">
    <property type="expression patterns" value="baseline and differential"/>
</dbReference>
<dbReference type="GO" id="GO:0009507">
    <property type="term" value="C:chloroplast"/>
    <property type="evidence" value="ECO:0000314"/>
    <property type="project" value="TAIR"/>
</dbReference>
<dbReference type="GO" id="GO:0016020">
    <property type="term" value="C:membrane"/>
    <property type="evidence" value="ECO:0007669"/>
    <property type="project" value="UniProtKB-SubCell"/>
</dbReference>
<dbReference type="GO" id="GO:0008271">
    <property type="term" value="F:secondary active sulfate transmembrane transporter activity"/>
    <property type="evidence" value="ECO:0007669"/>
    <property type="project" value="InterPro"/>
</dbReference>
<dbReference type="GO" id="GO:0015116">
    <property type="term" value="F:sulfate transmembrane transporter activity"/>
    <property type="evidence" value="ECO:0000315"/>
    <property type="project" value="TAIR"/>
</dbReference>
<dbReference type="GO" id="GO:0015293">
    <property type="term" value="F:symporter activity"/>
    <property type="evidence" value="ECO:0007669"/>
    <property type="project" value="UniProtKB-KW"/>
</dbReference>
<dbReference type="CDD" id="cd07042">
    <property type="entry name" value="STAS_SulP_like_sulfate_transporter"/>
    <property type="match status" value="1"/>
</dbReference>
<dbReference type="FunFam" id="3.30.750.24:FF:000002">
    <property type="entry name" value="Sulfate transporter 31"/>
    <property type="match status" value="1"/>
</dbReference>
<dbReference type="Gene3D" id="3.30.750.24">
    <property type="entry name" value="STAS domain"/>
    <property type="match status" value="1"/>
</dbReference>
<dbReference type="InterPro" id="IPR018045">
    <property type="entry name" value="S04_transporter_CS"/>
</dbReference>
<dbReference type="InterPro" id="IPR011547">
    <property type="entry name" value="SLC26A/SulP_dom"/>
</dbReference>
<dbReference type="InterPro" id="IPR001902">
    <property type="entry name" value="SLC26A/SulP_fam"/>
</dbReference>
<dbReference type="InterPro" id="IPR002645">
    <property type="entry name" value="STAS_dom"/>
</dbReference>
<dbReference type="InterPro" id="IPR036513">
    <property type="entry name" value="STAS_dom_sf"/>
</dbReference>
<dbReference type="NCBIfam" id="TIGR00815">
    <property type="entry name" value="sulP"/>
    <property type="match status" value="1"/>
</dbReference>
<dbReference type="PANTHER" id="PTHR11814">
    <property type="entry name" value="SULFATE TRANSPORTER"/>
    <property type="match status" value="1"/>
</dbReference>
<dbReference type="Pfam" id="PF01740">
    <property type="entry name" value="STAS"/>
    <property type="match status" value="1"/>
</dbReference>
<dbReference type="Pfam" id="PF00916">
    <property type="entry name" value="Sulfate_transp"/>
    <property type="match status" value="1"/>
</dbReference>
<dbReference type="SUPFAM" id="SSF52091">
    <property type="entry name" value="SpoIIaa-like"/>
    <property type="match status" value="1"/>
</dbReference>
<dbReference type="PROSITE" id="PS01130">
    <property type="entry name" value="SLC26A"/>
    <property type="match status" value="1"/>
</dbReference>
<dbReference type="PROSITE" id="PS50801">
    <property type="entry name" value="STAS"/>
    <property type="match status" value="1"/>
</dbReference>
<name>SUT31_ARATH</name>
<comment type="function">
    <text>H(+)/sulfate cotransporter that may play a role in the regulation of sulfate assimilation.</text>
</comment>
<comment type="subcellular location">
    <subcellularLocation>
        <location evidence="3">Membrane</location>
        <topology evidence="3">Multi-pass membrane protein</topology>
    </subcellularLocation>
</comment>
<comment type="tissue specificity">
    <text>Expressed only in leaves.</text>
</comment>
<comment type="induction">
    <text>By nitrogen starvation, but not by sulfate starvation.</text>
</comment>
<comment type="similarity">
    <text evidence="3">Belongs to the SLC26A/SulP transporter (TC 2.A.53) family.</text>
</comment>
<comment type="sequence caution" evidence="3">
    <conflict type="erroneous initiation">
        <sequence resource="EMBL-CDS" id="AAC14417"/>
    </conflict>
</comment>
<comment type="sequence caution" evidence="3">
    <conflict type="erroneous gene model prediction">
        <sequence resource="EMBL-CDS" id="BAA25175"/>
    </conflict>
</comment>